<reference key="1">
    <citation type="journal article" date="2003" name="Science">
        <title>Role of mobile DNA in the evolution of vancomycin-resistant Enterococcus faecalis.</title>
        <authorList>
            <person name="Paulsen I.T."/>
            <person name="Banerjei L."/>
            <person name="Myers G.S.A."/>
            <person name="Nelson K.E."/>
            <person name="Seshadri R."/>
            <person name="Read T.D."/>
            <person name="Fouts D.E."/>
            <person name="Eisen J.A."/>
            <person name="Gill S.R."/>
            <person name="Heidelberg J.F."/>
            <person name="Tettelin H."/>
            <person name="Dodson R.J."/>
            <person name="Umayam L.A."/>
            <person name="Brinkac L.M."/>
            <person name="Beanan M.J."/>
            <person name="Daugherty S.C."/>
            <person name="DeBoy R.T."/>
            <person name="Durkin S.A."/>
            <person name="Kolonay J.F."/>
            <person name="Madupu R."/>
            <person name="Nelson W.C."/>
            <person name="Vamathevan J.J."/>
            <person name="Tran B."/>
            <person name="Upton J."/>
            <person name="Hansen T."/>
            <person name="Shetty J."/>
            <person name="Khouri H.M."/>
            <person name="Utterback T.R."/>
            <person name="Radune D."/>
            <person name="Ketchum K.A."/>
            <person name="Dougherty B.A."/>
            <person name="Fraser C.M."/>
        </authorList>
    </citation>
    <scope>NUCLEOTIDE SEQUENCE [LARGE SCALE GENOMIC DNA]</scope>
    <source>
        <strain>ATCC 700802 / V583</strain>
    </source>
</reference>
<reference evidence="8" key="2">
    <citation type="journal article" date="2012" name="J. Mol. Biol.">
        <title>Characterization of the chitinolytic machinery of Enterococcus faecalis V583 and high-resolution structure of its oxidative CBM33 enzyme.</title>
        <authorList>
            <person name="Vaaje-Kolstad G."/>
            <person name="Bohle L.A."/>
            <person name="Gaseidnes S."/>
            <person name="Dalhus B."/>
            <person name="Bjoras M."/>
            <person name="Mathiesen G."/>
            <person name="Eijsink V.G."/>
        </authorList>
    </citation>
    <scope>X-RAY CRYSTALLOGRAPHY (0.95 ANGSTROMS) OF 29-194</scope>
    <scope>FUNCTION</scope>
    <scope>CATALYTIC ACTIVITY</scope>
    <scope>COFACTOR</scope>
    <scope>SUBCELLULAR LOCATION</scope>
    <scope>PATHWAY</scope>
    <source>
        <strain>ATCC 700802 / V583</strain>
    </source>
</reference>
<reference evidence="9 10 11" key="3">
    <citation type="journal article" date="2014" name="J. Biol. Chem.">
        <title>Structural and electronic snapshots during the transition from a Cu(II) to Cu(I) metal center of a lytic polysaccharide monooxygenase by X-ray photoreduction.</title>
        <authorList>
            <person name="Gudmundsson M."/>
            <person name="Kim S."/>
            <person name="Wu M."/>
            <person name="Ishida T."/>
            <person name="Momeni M.H."/>
            <person name="Vaaje-Kolstad G."/>
            <person name="Lundberg D."/>
            <person name="Royant A."/>
            <person name="Stahlberg J."/>
            <person name="Eijsink V.G."/>
            <person name="Beckham G.T."/>
            <person name="Sandgren M."/>
        </authorList>
    </citation>
    <scope>X-RAY CRYSTALLOGRAPHY (1.47 ANGSTROMS) OF 29-194 IN COMPLEX WITH COPPER</scope>
    <scope>COFACTOR</scope>
    <source>
        <strain>ATCC 700802 / V583</strain>
    </source>
</reference>
<gene>
    <name evidence="7" type="ordered locus">EF_0362</name>
</gene>
<protein>
    <recommendedName>
        <fullName evidence="6">Lytic chitin monooxygenase</fullName>
        <ecNumber evidence="2">1.14.99.53</ecNumber>
    </recommendedName>
    <alternativeName>
        <fullName evidence="4">EfCBM33A</fullName>
    </alternativeName>
    <alternativeName>
        <fullName evidence="5">Lytic polysaccharide monooxygenase</fullName>
        <shortName evidence="5">LPMO</shortName>
    </alternativeName>
</protein>
<comment type="function">
    <text evidence="2">Involved in chitin degradation. Catalyzes the oxidative cleavage of glycosidic bonds in both alpha- and beta-chitin via a copper-dependent mechanism, leading to oxidized chitooligosaccharides with a dominance of even-numbered products. Acts synergistically with the chitinase EfChi18A, and combining the two enzymes leads to rapid and complete depolymerization of crystalline chitin, especially with beta-chitin as a substrate. Is likely involved in a chitin degradation pathway that allows E.faecalis V583 to grow on chitin as a carbon source.</text>
</comment>
<comment type="catalytic activity">
    <reaction evidence="2">
        <text>[(1-&gt;4)-N-acetyl-beta-D-glucosaminyl]n+m + reduced acceptor + O2 = [(1-&gt;4)-N-acetyl-beta-D-glucosaminyl]m-1-(1-&gt;4)-2-(acetylamino)-2-deoxy-D-glucono-1,5-lactone + [(1-&gt;4)-N-acetyl-beta-D-glucosaminyl]n + acceptor + H2O.</text>
        <dbReference type="EC" id="1.14.99.53"/>
    </reaction>
</comment>
<comment type="cofactor">
    <cofactor evidence="2 3">
        <name>Cu(2+)</name>
        <dbReference type="ChEBI" id="CHEBI:29036"/>
    </cofactor>
    <text evidence="3">The copper metal center seems to be reduced from a Cu(II) to Cu(I) oxidation state prior to binding of dioxygen for catalysis.</text>
</comment>
<comment type="pathway">
    <text evidence="2">Glycan degradation; chitin degradation.</text>
</comment>
<comment type="subcellular location">
    <subcellularLocation>
        <location evidence="6">Secreted</location>
    </subcellularLocation>
</comment>
<evidence type="ECO:0000255" key="1"/>
<evidence type="ECO:0000269" key="2">
    <source>
    </source>
</evidence>
<evidence type="ECO:0000269" key="3">
    <source>
    </source>
</evidence>
<evidence type="ECO:0000303" key="4">
    <source>
    </source>
</evidence>
<evidence type="ECO:0000303" key="5">
    <source>
    </source>
</evidence>
<evidence type="ECO:0000305" key="6">
    <source>
    </source>
</evidence>
<evidence type="ECO:0000312" key="7">
    <source>
        <dbReference type="EMBL" id="AAO80225.1"/>
    </source>
</evidence>
<evidence type="ECO:0007744" key="8">
    <source>
        <dbReference type="PDB" id="4A02"/>
    </source>
</evidence>
<evidence type="ECO:0007744" key="9">
    <source>
        <dbReference type="PDB" id="4ALC"/>
    </source>
</evidence>
<evidence type="ECO:0007744" key="10">
    <source>
        <dbReference type="PDB" id="4ALE"/>
    </source>
</evidence>
<evidence type="ECO:0007744" key="11">
    <source>
        <dbReference type="PDB" id="4ALQ"/>
    </source>
</evidence>
<evidence type="ECO:0007744" key="12">
    <source>
        <dbReference type="PDB" id="4ALR"/>
    </source>
</evidence>
<evidence type="ECO:0007744" key="13">
    <source>
        <dbReference type="PDB" id="4ALS"/>
    </source>
</evidence>
<evidence type="ECO:0007744" key="14">
    <source>
        <dbReference type="PDB" id="4ALT"/>
    </source>
</evidence>
<evidence type="ECO:0007829" key="15">
    <source>
        <dbReference type="PDB" id="4A02"/>
    </source>
</evidence>
<evidence type="ECO:0007829" key="16">
    <source>
        <dbReference type="PDB" id="4ALE"/>
    </source>
</evidence>
<evidence type="ECO:0007829" key="17">
    <source>
        <dbReference type="PDB" id="4ALS"/>
    </source>
</evidence>
<organism>
    <name type="scientific">Enterococcus faecalis (strain ATCC 700802 / V583)</name>
    <dbReference type="NCBI Taxonomy" id="226185"/>
    <lineage>
        <taxon>Bacteria</taxon>
        <taxon>Bacillati</taxon>
        <taxon>Bacillota</taxon>
        <taxon>Bacilli</taxon>
        <taxon>Lactobacillales</taxon>
        <taxon>Enterococcaceae</taxon>
        <taxon>Enterococcus</taxon>
    </lineage>
</organism>
<sequence length="194" mass="21138">MKKSLLTIVLAFSFVLGGAALAPTVSEAHGYVASPGSRAFFGSSAGGNLNTNVGRAQWEPQSIEAPKNTFITGKLASAGVSGFEPLDEQTATRWHKTNITTGPLDITWNLTAQHRTASWDYYITKNGWNPNQPLDIKNFDKIASIDGKQEVPNKVVKQTINIPTDRKGYHVIYAVWGIGDTVNAFYQAIDVNIQ</sequence>
<name>LCHMO_ENTFA</name>
<dbReference type="EC" id="1.14.99.53" evidence="2"/>
<dbReference type="EMBL" id="AE016830">
    <property type="protein sequence ID" value="AAO80225.1"/>
    <property type="molecule type" value="Genomic_DNA"/>
</dbReference>
<dbReference type="RefSeq" id="NP_814154.1">
    <property type="nucleotide sequence ID" value="NC_004668.1"/>
</dbReference>
<dbReference type="RefSeq" id="WP_002355225.1">
    <property type="nucleotide sequence ID" value="NZ_KE136524.1"/>
</dbReference>
<dbReference type="PDB" id="4A02">
    <property type="method" value="X-ray"/>
    <property type="resolution" value="0.95 A"/>
    <property type="chains" value="A=29-194"/>
</dbReference>
<dbReference type="PDB" id="4ALC">
    <property type="method" value="X-ray"/>
    <property type="resolution" value="1.49 A"/>
    <property type="chains" value="A=29-194"/>
</dbReference>
<dbReference type="PDB" id="4ALE">
    <property type="method" value="X-ray"/>
    <property type="resolution" value="1.48 A"/>
    <property type="chains" value="A=29-194"/>
</dbReference>
<dbReference type="PDB" id="4ALQ">
    <property type="method" value="X-ray"/>
    <property type="resolution" value="1.48 A"/>
    <property type="chains" value="A=29-194"/>
</dbReference>
<dbReference type="PDB" id="4ALR">
    <property type="method" value="X-ray"/>
    <property type="resolution" value="1.49 A"/>
    <property type="chains" value="A=29-194"/>
</dbReference>
<dbReference type="PDB" id="4ALS">
    <property type="method" value="X-ray"/>
    <property type="resolution" value="1.47 A"/>
    <property type="chains" value="A=29-194"/>
</dbReference>
<dbReference type="PDB" id="4ALT">
    <property type="method" value="X-ray"/>
    <property type="resolution" value="1.49 A"/>
    <property type="chains" value="A=29-194"/>
</dbReference>
<dbReference type="PDBsum" id="4A02"/>
<dbReference type="PDBsum" id="4ALC"/>
<dbReference type="PDBsum" id="4ALE"/>
<dbReference type="PDBsum" id="4ALQ"/>
<dbReference type="PDBsum" id="4ALR"/>
<dbReference type="PDBsum" id="4ALS"/>
<dbReference type="PDBsum" id="4ALT"/>
<dbReference type="SMR" id="Q838S1"/>
<dbReference type="STRING" id="226185.EF_0362"/>
<dbReference type="CAZy" id="AA10">
    <property type="family name" value="Auxiliary Activities 10"/>
</dbReference>
<dbReference type="EnsemblBacteria" id="AAO80225">
    <property type="protein sequence ID" value="AAO80225"/>
    <property type="gene ID" value="EF_0362"/>
</dbReference>
<dbReference type="KEGG" id="efa:EF0362"/>
<dbReference type="PATRIC" id="fig|226185.45.peg.2967"/>
<dbReference type="eggNOG" id="COG3397">
    <property type="taxonomic scope" value="Bacteria"/>
</dbReference>
<dbReference type="HOGENOM" id="CLU_047929_2_0_9"/>
<dbReference type="BRENDA" id="1.14.99.53">
    <property type="organism ID" value="2095"/>
</dbReference>
<dbReference type="UniPathway" id="UPA00349"/>
<dbReference type="EvolutionaryTrace" id="Q838S1"/>
<dbReference type="Proteomes" id="UP000001415">
    <property type="component" value="Chromosome"/>
</dbReference>
<dbReference type="GO" id="GO:0005576">
    <property type="term" value="C:extracellular region"/>
    <property type="evidence" value="ECO:0007669"/>
    <property type="project" value="UniProtKB-SubCell"/>
</dbReference>
<dbReference type="GO" id="GO:0008061">
    <property type="term" value="F:chitin binding"/>
    <property type="evidence" value="ECO:0000314"/>
    <property type="project" value="UniProtKB"/>
</dbReference>
<dbReference type="GO" id="GO:0005507">
    <property type="term" value="F:copper ion binding"/>
    <property type="evidence" value="ECO:0000314"/>
    <property type="project" value="UniProtKB"/>
</dbReference>
<dbReference type="GO" id="GO:0004497">
    <property type="term" value="F:monooxygenase activity"/>
    <property type="evidence" value="ECO:0000314"/>
    <property type="project" value="UniProtKB"/>
</dbReference>
<dbReference type="GO" id="GO:0006032">
    <property type="term" value="P:chitin catabolic process"/>
    <property type="evidence" value="ECO:0000314"/>
    <property type="project" value="UniProtKB"/>
</dbReference>
<dbReference type="GO" id="GO:0000272">
    <property type="term" value="P:polysaccharide catabolic process"/>
    <property type="evidence" value="ECO:0007669"/>
    <property type="project" value="UniProtKB-KW"/>
</dbReference>
<dbReference type="CDD" id="cd21177">
    <property type="entry name" value="LPMO_AA10"/>
    <property type="match status" value="1"/>
</dbReference>
<dbReference type="Gene3D" id="2.70.50.50">
    <property type="entry name" value="chitin-binding protein cbp21"/>
    <property type="match status" value="1"/>
</dbReference>
<dbReference type="InterPro" id="IPR004302">
    <property type="entry name" value="Cellulose/chitin-bd_N"/>
</dbReference>
<dbReference type="InterPro" id="IPR051024">
    <property type="entry name" value="GlcNAc_Chitin_IntDeg"/>
</dbReference>
<dbReference type="InterPro" id="IPR014756">
    <property type="entry name" value="Ig_E-set"/>
</dbReference>
<dbReference type="PANTHER" id="PTHR34823:SF1">
    <property type="entry name" value="CHITIN-BINDING TYPE-4 DOMAIN-CONTAINING PROTEIN"/>
    <property type="match status" value="1"/>
</dbReference>
<dbReference type="PANTHER" id="PTHR34823">
    <property type="entry name" value="GLCNAC-BINDING PROTEIN A"/>
    <property type="match status" value="1"/>
</dbReference>
<dbReference type="Pfam" id="PF03067">
    <property type="entry name" value="LPMO_10"/>
    <property type="match status" value="1"/>
</dbReference>
<dbReference type="SUPFAM" id="SSF81296">
    <property type="entry name" value="E set domains"/>
    <property type="match status" value="1"/>
</dbReference>
<proteinExistence type="evidence at protein level"/>
<keyword id="KW-0002">3D-structure</keyword>
<keyword id="KW-0119">Carbohydrate metabolism</keyword>
<keyword id="KW-0146">Chitin degradation</keyword>
<keyword id="KW-0147">Chitin-binding</keyword>
<keyword id="KW-0186">Copper</keyword>
<keyword id="KW-0479">Metal-binding</keyword>
<keyword id="KW-0560">Oxidoreductase</keyword>
<keyword id="KW-0624">Polysaccharide degradation</keyword>
<keyword id="KW-1185">Reference proteome</keyword>
<keyword id="KW-0964">Secreted</keyword>
<keyword id="KW-0732">Signal</keyword>
<feature type="signal peptide" evidence="1">
    <location>
        <begin position="1"/>
        <end position="28"/>
    </location>
</feature>
<feature type="chain" id="PRO_5004299127" description="Lytic chitin monooxygenase">
    <location>
        <begin position="29"/>
        <end position="194"/>
    </location>
</feature>
<feature type="domain" description="Chitin-binding type-4" evidence="1">
    <location>
        <begin position="29"/>
        <end position="191"/>
    </location>
</feature>
<feature type="binding site" evidence="3 10 12 13 14">
    <location>
        <position position="29"/>
    </location>
    <ligand>
        <name>Cu cation</name>
        <dbReference type="ChEBI" id="CHEBI:23378"/>
    </ligand>
</feature>
<feature type="binding site" evidence="3 10 12 13 14">
    <location>
        <position position="114"/>
    </location>
    <ligand>
        <name>Cu cation</name>
        <dbReference type="ChEBI" id="CHEBI:23378"/>
    </ligand>
</feature>
<feature type="strand" evidence="15">
    <location>
        <begin position="30"/>
        <end position="34"/>
    </location>
</feature>
<feature type="helix" evidence="15">
    <location>
        <begin position="38"/>
        <end position="41"/>
    </location>
</feature>
<feature type="helix" evidence="15">
    <location>
        <begin position="44"/>
        <end position="46"/>
    </location>
</feature>
<feature type="helix" evidence="15">
    <location>
        <begin position="54"/>
        <end position="57"/>
    </location>
</feature>
<feature type="helix" evidence="16">
    <location>
        <begin position="60"/>
        <end position="62"/>
    </location>
</feature>
<feature type="strand" evidence="15">
    <location>
        <begin position="64"/>
        <end position="66"/>
    </location>
</feature>
<feature type="turn" evidence="15">
    <location>
        <begin position="75"/>
        <end position="79"/>
    </location>
</feature>
<feature type="helix" evidence="15">
    <location>
        <begin position="84"/>
        <end position="87"/>
    </location>
</feature>
<feature type="strand" evidence="17">
    <location>
        <begin position="91"/>
        <end position="94"/>
    </location>
</feature>
<feature type="strand" evidence="15">
    <location>
        <begin position="97"/>
        <end position="99"/>
    </location>
</feature>
<feature type="strand" evidence="15">
    <location>
        <begin position="101"/>
        <end position="112"/>
    </location>
</feature>
<feature type="strand" evidence="15">
    <location>
        <begin position="116"/>
        <end position="124"/>
    </location>
</feature>
<feature type="helix" evidence="15">
    <location>
        <begin position="136"/>
        <end position="138"/>
    </location>
</feature>
<feature type="strand" evidence="15">
    <location>
        <begin position="139"/>
        <end position="150"/>
    </location>
</feature>
<feature type="strand" evidence="15">
    <location>
        <begin position="154"/>
        <end position="162"/>
    </location>
</feature>
<feature type="strand" evidence="15">
    <location>
        <begin position="168"/>
        <end position="193"/>
    </location>
</feature>
<accession>Q838S1</accession>